<organism>
    <name type="scientific">Escherichia coli O6:H1 (strain CFT073 / ATCC 700928 / UPEC)</name>
    <dbReference type="NCBI Taxonomy" id="199310"/>
    <lineage>
        <taxon>Bacteria</taxon>
        <taxon>Pseudomonadati</taxon>
        <taxon>Pseudomonadota</taxon>
        <taxon>Gammaproteobacteria</taxon>
        <taxon>Enterobacterales</taxon>
        <taxon>Enterobacteriaceae</taxon>
        <taxon>Escherichia</taxon>
    </lineage>
</organism>
<reference key="1">
    <citation type="journal article" date="2002" name="Proc. Natl. Acad. Sci. U.S.A.">
        <title>Extensive mosaic structure revealed by the complete genome sequence of uropathogenic Escherichia coli.</title>
        <authorList>
            <person name="Welch R.A."/>
            <person name="Burland V."/>
            <person name="Plunkett G. III"/>
            <person name="Redford P."/>
            <person name="Roesch P."/>
            <person name="Rasko D."/>
            <person name="Buckles E.L."/>
            <person name="Liou S.-R."/>
            <person name="Boutin A."/>
            <person name="Hackett J."/>
            <person name="Stroud D."/>
            <person name="Mayhew G.F."/>
            <person name="Rose D.J."/>
            <person name="Zhou S."/>
            <person name="Schwartz D.C."/>
            <person name="Perna N.T."/>
            <person name="Mobley H.L.T."/>
            <person name="Donnenberg M.S."/>
            <person name="Blattner F.R."/>
        </authorList>
    </citation>
    <scope>NUCLEOTIDE SEQUENCE [LARGE SCALE GENOMIC DNA]</scope>
    <source>
        <strain>CFT073 / ATCC 700928 / UPEC</strain>
    </source>
</reference>
<dbReference type="EMBL" id="AE014075">
    <property type="protein sequence ID" value="AAN80208.1"/>
    <property type="molecule type" value="Genomic_DNA"/>
</dbReference>
<dbReference type="RefSeq" id="WP_000776253.1">
    <property type="nucleotide sequence ID" value="NZ_CP051263.1"/>
</dbReference>
<dbReference type="SMR" id="P0A9F4"/>
<dbReference type="STRING" id="199310.c1742"/>
<dbReference type="GeneID" id="93775394"/>
<dbReference type="KEGG" id="ecc:c1742"/>
<dbReference type="eggNOG" id="COG0583">
    <property type="taxonomic scope" value="Bacteria"/>
</dbReference>
<dbReference type="HOGENOM" id="CLU_039613_6_2_6"/>
<dbReference type="BioCyc" id="ECOL199310:C1742-MONOMER"/>
<dbReference type="Proteomes" id="UP000001410">
    <property type="component" value="Chromosome"/>
</dbReference>
<dbReference type="GO" id="GO:0005737">
    <property type="term" value="C:cytoplasm"/>
    <property type="evidence" value="ECO:0007669"/>
    <property type="project" value="UniProtKB-SubCell"/>
</dbReference>
<dbReference type="GO" id="GO:0003700">
    <property type="term" value="F:DNA-binding transcription factor activity"/>
    <property type="evidence" value="ECO:0007669"/>
    <property type="project" value="InterPro"/>
</dbReference>
<dbReference type="GO" id="GO:0000976">
    <property type="term" value="F:transcription cis-regulatory region binding"/>
    <property type="evidence" value="ECO:0007669"/>
    <property type="project" value="TreeGrafter"/>
</dbReference>
<dbReference type="GO" id="GO:0019344">
    <property type="term" value="P:cysteine biosynthetic process"/>
    <property type="evidence" value="ECO:0007669"/>
    <property type="project" value="UniProtKB-KW"/>
</dbReference>
<dbReference type="CDD" id="cd08443">
    <property type="entry name" value="PBP2_CysB"/>
    <property type="match status" value="1"/>
</dbReference>
<dbReference type="FunFam" id="1.10.10.10:FF:000021">
    <property type="entry name" value="HTH-type transcriptional regulator CysB"/>
    <property type="match status" value="1"/>
</dbReference>
<dbReference type="FunFam" id="3.40.190.10:FF:000037">
    <property type="entry name" value="HTH-type transcriptional regulator CysB"/>
    <property type="match status" value="1"/>
</dbReference>
<dbReference type="Gene3D" id="3.40.190.10">
    <property type="entry name" value="Periplasmic binding protein-like II"/>
    <property type="match status" value="2"/>
</dbReference>
<dbReference type="Gene3D" id="1.10.10.10">
    <property type="entry name" value="Winged helix-like DNA-binding domain superfamily/Winged helix DNA-binding domain"/>
    <property type="match status" value="1"/>
</dbReference>
<dbReference type="InterPro" id="IPR005119">
    <property type="entry name" value="LysR_subst-bd"/>
</dbReference>
<dbReference type="InterPro" id="IPR000847">
    <property type="entry name" value="Tscrpt_reg_HTH_LysR"/>
</dbReference>
<dbReference type="InterPro" id="IPR036388">
    <property type="entry name" value="WH-like_DNA-bd_sf"/>
</dbReference>
<dbReference type="InterPro" id="IPR036390">
    <property type="entry name" value="WH_DNA-bd_sf"/>
</dbReference>
<dbReference type="NCBIfam" id="NF009326">
    <property type="entry name" value="PRK12681.1"/>
    <property type="match status" value="1"/>
</dbReference>
<dbReference type="NCBIfam" id="NF009327">
    <property type="entry name" value="PRK12684.1"/>
    <property type="match status" value="1"/>
</dbReference>
<dbReference type="PANTHER" id="PTHR30126">
    <property type="entry name" value="HTH-TYPE TRANSCRIPTIONAL REGULATOR"/>
    <property type="match status" value="1"/>
</dbReference>
<dbReference type="PANTHER" id="PTHR30126:SF6">
    <property type="entry name" value="HTH-TYPE TRANSCRIPTIONAL REGULATOR CYSB-RELATED"/>
    <property type="match status" value="1"/>
</dbReference>
<dbReference type="Pfam" id="PF00126">
    <property type="entry name" value="HTH_1"/>
    <property type="match status" value="1"/>
</dbReference>
<dbReference type="Pfam" id="PF03466">
    <property type="entry name" value="LysR_substrate"/>
    <property type="match status" value="1"/>
</dbReference>
<dbReference type="PRINTS" id="PR00039">
    <property type="entry name" value="HTHLYSR"/>
</dbReference>
<dbReference type="SUPFAM" id="SSF53850">
    <property type="entry name" value="Periplasmic binding protein-like II"/>
    <property type="match status" value="1"/>
</dbReference>
<dbReference type="SUPFAM" id="SSF46785">
    <property type="entry name" value="Winged helix' DNA-binding domain"/>
    <property type="match status" value="1"/>
</dbReference>
<dbReference type="PROSITE" id="PS50931">
    <property type="entry name" value="HTH_LYSR"/>
    <property type="match status" value="1"/>
</dbReference>
<evidence type="ECO:0000250" key="1"/>
<evidence type="ECO:0000255" key="2">
    <source>
        <dbReference type="PROSITE-ProRule" id="PRU00253"/>
    </source>
</evidence>
<evidence type="ECO:0000305" key="3"/>
<gene>
    <name type="primary">cysB</name>
    <name type="ordered locus">c1742</name>
</gene>
<accession>P0A9F4</accession>
<accession>P06613</accession>
<accession>P76834</accession>
<feature type="chain" id="PRO_0000105615" description="HTH-type transcriptional regulator CysB">
    <location>
        <begin position="1"/>
        <end position="324"/>
    </location>
</feature>
<feature type="domain" description="HTH lysR-type" evidence="2">
    <location>
        <begin position="1"/>
        <end position="59"/>
    </location>
</feature>
<feature type="DNA-binding region" description="H-T-H motif" evidence="2">
    <location>
        <begin position="19"/>
        <end position="38"/>
    </location>
</feature>
<comment type="function">
    <text evidence="1">This protein is a positive regulator of gene expression for the cysteine regulon. The inducer for CysB is N-acetylserine (By similarity).</text>
</comment>
<comment type="subunit">
    <text evidence="1">Homotetramer.</text>
</comment>
<comment type="subcellular location">
    <subcellularLocation>
        <location evidence="3">Cytoplasm</location>
    </subcellularLocation>
</comment>
<comment type="similarity">
    <text evidence="3">Belongs to the LysR transcriptional regulatory family.</text>
</comment>
<proteinExistence type="inferred from homology"/>
<sequence>MKLQQLRYIVEVVNHNLNVSSTAEGLYTSQPGISKQVRMLEDELGIQIFSRSGKHLTQVTPAGQEIIRIAREVLSKVDAIKSVAGEHTWPDKGSLYIATTHTQARYALPNVIKGFIERYPRVSLHMHQGSPTQIADAVSKGNADFAIATEALHLYEDLVMLPCYHWNRAIVVTPDHPLAGKKAITIEELAQYPLVTYTFGFTGRSELDTAFNRAGLTPRIVFTATDADVIKTYVRLGLGVGVIASMAVDPVADPDLVRVDAHDIFSHSTTKIGFRRSTFLRSYMYDFIQRFAPHLTRDVVDAAVALRSNEEIEVMFKDIKLPEK</sequence>
<keyword id="KW-0010">Activator</keyword>
<keyword id="KW-0028">Amino-acid biosynthesis</keyword>
<keyword id="KW-0198">Cysteine biosynthesis</keyword>
<keyword id="KW-0963">Cytoplasm</keyword>
<keyword id="KW-0238">DNA-binding</keyword>
<keyword id="KW-1185">Reference proteome</keyword>
<keyword id="KW-0804">Transcription</keyword>
<keyword id="KW-0805">Transcription regulation</keyword>
<name>CYSB_ECOL6</name>
<protein>
    <recommendedName>
        <fullName>HTH-type transcriptional regulator CysB</fullName>
    </recommendedName>
    <alternativeName>
        <fullName>Cys regulon transcriptional activator</fullName>
    </alternativeName>
</protein>